<reference key="1">
    <citation type="journal article" date="2005" name="Science">
        <title>Life at depth: Photobacterium profundum genome sequence and expression analysis.</title>
        <authorList>
            <person name="Vezzi A."/>
            <person name="Campanaro S."/>
            <person name="D'Angelo M."/>
            <person name="Simonato F."/>
            <person name="Vitulo N."/>
            <person name="Lauro F.M."/>
            <person name="Cestaro A."/>
            <person name="Malacrida G."/>
            <person name="Simionati B."/>
            <person name="Cannata N."/>
            <person name="Romualdi C."/>
            <person name="Bartlett D.H."/>
            <person name="Valle G."/>
        </authorList>
    </citation>
    <scope>NUCLEOTIDE SEQUENCE [LARGE SCALE GENOMIC DNA]</scope>
    <source>
        <strain>ATCC BAA-1253 / SS9</strain>
    </source>
</reference>
<name>LEUD_PHOPR</name>
<evidence type="ECO:0000255" key="1">
    <source>
        <dbReference type="HAMAP-Rule" id="MF_01031"/>
    </source>
</evidence>
<proteinExistence type="inferred from homology"/>
<accession>Q6LV27</accession>
<gene>
    <name evidence="1" type="primary">leuD</name>
    <name type="ordered locus">PBPRA0416</name>
</gene>
<comment type="function">
    <text evidence="1">Catalyzes the isomerization between 2-isopropylmalate and 3-isopropylmalate, via the formation of 2-isopropylmaleate.</text>
</comment>
<comment type="catalytic activity">
    <reaction evidence="1">
        <text>(2R,3S)-3-isopropylmalate = (2S)-2-isopropylmalate</text>
        <dbReference type="Rhea" id="RHEA:32287"/>
        <dbReference type="ChEBI" id="CHEBI:1178"/>
        <dbReference type="ChEBI" id="CHEBI:35121"/>
        <dbReference type="EC" id="4.2.1.33"/>
    </reaction>
</comment>
<comment type="pathway">
    <text evidence="1">Amino-acid biosynthesis; L-leucine biosynthesis; L-leucine from 3-methyl-2-oxobutanoate: step 2/4.</text>
</comment>
<comment type="subunit">
    <text evidence="1">Heterodimer of LeuC and LeuD.</text>
</comment>
<comment type="similarity">
    <text evidence="1">Belongs to the LeuD family. LeuD type 1 subfamily.</text>
</comment>
<keyword id="KW-0028">Amino-acid biosynthesis</keyword>
<keyword id="KW-0100">Branched-chain amino acid biosynthesis</keyword>
<keyword id="KW-0432">Leucine biosynthesis</keyword>
<keyword id="KW-0456">Lyase</keyword>
<keyword id="KW-1185">Reference proteome</keyword>
<protein>
    <recommendedName>
        <fullName evidence="1">3-isopropylmalate dehydratase small subunit</fullName>
        <ecNumber evidence="1">4.2.1.33</ecNumber>
    </recommendedName>
    <alternativeName>
        <fullName evidence="1">Alpha-IPM isomerase</fullName>
        <shortName evidence="1">IPMI</shortName>
    </alternativeName>
    <alternativeName>
        <fullName evidence="1">Isopropylmalate isomerase</fullName>
    </alternativeName>
</protein>
<feature type="chain" id="PRO_0000141854" description="3-isopropylmalate dehydratase small subunit">
    <location>
        <begin position="1"/>
        <end position="200"/>
    </location>
</feature>
<organism>
    <name type="scientific">Photobacterium profundum (strain SS9)</name>
    <dbReference type="NCBI Taxonomy" id="298386"/>
    <lineage>
        <taxon>Bacteria</taxon>
        <taxon>Pseudomonadati</taxon>
        <taxon>Pseudomonadota</taxon>
        <taxon>Gammaproteobacteria</taxon>
        <taxon>Vibrionales</taxon>
        <taxon>Vibrionaceae</taxon>
        <taxon>Photobacterium</taxon>
    </lineage>
</organism>
<dbReference type="EC" id="4.2.1.33" evidence="1"/>
<dbReference type="EMBL" id="CR378664">
    <property type="protein sequence ID" value="CAG18848.1"/>
    <property type="molecule type" value="Genomic_DNA"/>
</dbReference>
<dbReference type="RefSeq" id="WP_011217205.1">
    <property type="nucleotide sequence ID" value="NC_006370.1"/>
</dbReference>
<dbReference type="SMR" id="Q6LV27"/>
<dbReference type="STRING" id="298386.PBPRA0416"/>
<dbReference type="KEGG" id="ppr:PBPRA0416"/>
<dbReference type="eggNOG" id="COG0066">
    <property type="taxonomic scope" value="Bacteria"/>
</dbReference>
<dbReference type="HOGENOM" id="CLU_081378_0_3_6"/>
<dbReference type="UniPathway" id="UPA00048">
    <property type="reaction ID" value="UER00071"/>
</dbReference>
<dbReference type="Proteomes" id="UP000000593">
    <property type="component" value="Chromosome 1"/>
</dbReference>
<dbReference type="GO" id="GO:0009316">
    <property type="term" value="C:3-isopropylmalate dehydratase complex"/>
    <property type="evidence" value="ECO:0007669"/>
    <property type="project" value="InterPro"/>
</dbReference>
<dbReference type="GO" id="GO:0003861">
    <property type="term" value="F:3-isopropylmalate dehydratase activity"/>
    <property type="evidence" value="ECO:0007669"/>
    <property type="project" value="UniProtKB-UniRule"/>
</dbReference>
<dbReference type="GO" id="GO:0009098">
    <property type="term" value="P:L-leucine biosynthetic process"/>
    <property type="evidence" value="ECO:0007669"/>
    <property type="project" value="UniProtKB-UniRule"/>
</dbReference>
<dbReference type="CDD" id="cd01577">
    <property type="entry name" value="IPMI_Swivel"/>
    <property type="match status" value="1"/>
</dbReference>
<dbReference type="FunFam" id="3.20.19.10:FF:000003">
    <property type="entry name" value="3-isopropylmalate dehydratase small subunit"/>
    <property type="match status" value="1"/>
</dbReference>
<dbReference type="Gene3D" id="3.20.19.10">
    <property type="entry name" value="Aconitase, domain 4"/>
    <property type="match status" value="1"/>
</dbReference>
<dbReference type="HAMAP" id="MF_01031">
    <property type="entry name" value="LeuD_type1"/>
    <property type="match status" value="1"/>
</dbReference>
<dbReference type="InterPro" id="IPR004431">
    <property type="entry name" value="3-IsopropMal_deHydase_ssu"/>
</dbReference>
<dbReference type="InterPro" id="IPR015928">
    <property type="entry name" value="Aconitase/3IPM_dehydase_swvl"/>
</dbReference>
<dbReference type="InterPro" id="IPR000573">
    <property type="entry name" value="AconitaseA/IPMdHydase_ssu_swvl"/>
</dbReference>
<dbReference type="InterPro" id="IPR033940">
    <property type="entry name" value="IPMI_Swivel"/>
</dbReference>
<dbReference type="InterPro" id="IPR050075">
    <property type="entry name" value="LeuD"/>
</dbReference>
<dbReference type="NCBIfam" id="TIGR00171">
    <property type="entry name" value="leuD"/>
    <property type="match status" value="1"/>
</dbReference>
<dbReference type="NCBIfam" id="NF002458">
    <property type="entry name" value="PRK01641.1"/>
    <property type="match status" value="1"/>
</dbReference>
<dbReference type="PANTHER" id="PTHR43345:SF5">
    <property type="entry name" value="3-ISOPROPYLMALATE DEHYDRATASE SMALL SUBUNIT"/>
    <property type="match status" value="1"/>
</dbReference>
<dbReference type="PANTHER" id="PTHR43345">
    <property type="entry name" value="3-ISOPROPYLMALATE DEHYDRATASE SMALL SUBUNIT 2-RELATED-RELATED"/>
    <property type="match status" value="1"/>
</dbReference>
<dbReference type="Pfam" id="PF00694">
    <property type="entry name" value="Aconitase_C"/>
    <property type="match status" value="1"/>
</dbReference>
<dbReference type="SUPFAM" id="SSF52016">
    <property type="entry name" value="LeuD/IlvD-like"/>
    <property type="match status" value="1"/>
</dbReference>
<sequence length="200" mass="22508">MTGFKQHTGLVVPLDTANIDTDAIIPKQFLQKVTRTGFGQHLFNDWRFLDDAGQQENPDFIMNAPRYQGASILLARENFGCGSSREHAPWALADYGIQVMIAPSFADIFYGNSINNQMVPVRLTDQEVDELFQYVETNEGAEITVDLETMQVTANGKTYSFEIDEFRRHCLLNGLDNIGLTLQHADKIAEYEAKIPAFLV</sequence>